<organism>
    <name type="scientific">Brucella abortus biovar 1 (strain 9-941)</name>
    <dbReference type="NCBI Taxonomy" id="262698"/>
    <lineage>
        <taxon>Bacteria</taxon>
        <taxon>Pseudomonadati</taxon>
        <taxon>Pseudomonadota</taxon>
        <taxon>Alphaproteobacteria</taxon>
        <taxon>Hyphomicrobiales</taxon>
        <taxon>Brucellaceae</taxon>
        <taxon>Brucella/Ochrobactrum group</taxon>
        <taxon>Brucella</taxon>
    </lineage>
</organism>
<dbReference type="EMBL" id="AE017223">
    <property type="protein sequence ID" value="AAX75061.1"/>
    <property type="molecule type" value="Genomic_DNA"/>
</dbReference>
<dbReference type="RefSeq" id="WP_002964842.1">
    <property type="nucleotide sequence ID" value="NC_006932.1"/>
</dbReference>
<dbReference type="SMR" id="Q57BC3"/>
<dbReference type="EnsemblBacteria" id="AAX75061">
    <property type="protein sequence ID" value="AAX75061"/>
    <property type="gene ID" value="BruAb1_1743"/>
</dbReference>
<dbReference type="GeneID" id="93017891"/>
<dbReference type="KEGG" id="bmb:BruAb1_1743"/>
<dbReference type="HOGENOM" id="CLU_021838_5_3_5"/>
<dbReference type="Proteomes" id="UP000000540">
    <property type="component" value="Chromosome I"/>
</dbReference>
<dbReference type="GO" id="GO:0005886">
    <property type="term" value="C:plasma membrane"/>
    <property type="evidence" value="ECO:0007669"/>
    <property type="project" value="UniProtKB-SubCell"/>
</dbReference>
<dbReference type="GO" id="GO:0022857">
    <property type="term" value="F:transmembrane transporter activity"/>
    <property type="evidence" value="ECO:0007669"/>
    <property type="project" value="InterPro"/>
</dbReference>
<dbReference type="GO" id="GO:0015888">
    <property type="term" value="P:thiamine transport"/>
    <property type="evidence" value="ECO:0007669"/>
    <property type="project" value="InterPro"/>
</dbReference>
<dbReference type="CDD" id="cd06261">
    <property type="entry name" value="TM_PBP2"/>
    <property type="match status" value="2"/>
</dbReference>
<dbReference type="Gene3D" id="1.10.3720.10">
    <property type="entry name" value="MetI-like"/>
    <property type="match status" value="2"/>
</dbReference>
<dbReference type="InterPro" id="IPR000515">
    <property type="entry name" value="MetI-like"/>
</dbReference>
<dbReference type="InterPro" id="IPR035906">
    <property type="entry name" value="MetI-like_sf"/>
</dbReference>
<dbReference type="InterPro" id="IPR005947">
    <property type="entry name" value="ThiP_ABC_transpt"/>
</dbReference>
<dbReference type="NCBIfam" id="NF006956">
    <property type="entry name" value="PRK09433.2-5"/>
    <property type="match status" value="1"/>
</dbReference>
<dbReference type="NCBIfam" id="TIGR01253">
    <property type="entry name" value="thiP"/>
    <property type="match status" value="1"/>
</dbReference>
<dbReference type="PANTHER" id="PTHR30183">
    <property type="entry name" value="MOLYBDENUM TRANSPORT SYSTEM PERMEASE PROTEIN MODB"/>
    <property type="match status" value="1"/>
</dbReference>
<dbReference type="PANTHER" id="PTHR30183:SF9">
    <property type="entry name" value="THIAMINE TRANSPORT SYSTEM PERMEASE PROTEIN THIP"/>
    <property type="match status" value="1"/>
</dbReference>
<dbReference type="Pfam" id="PF00528">
    <property type="entry name" value="BPD_transp_1"/>
    <property type="match status" value="1"/>
</dbReference>
<dbReference type="SUPFAM" id="SSF161098">
    <property type="entry name" value="MetI-like"/>
    <property type="match status" value="2"/>
</dbReference>
<dbReference type="PROSITE" id="PS50928">
    <property type="entry name" value="ABC_TM1"/>
    <property type="match status" value="2"/>
</dbReference>
<sequence length="543" mass="58302">MTATPARRTSLASPATKPVAGGLALAFLATLAGGALLALALEAGGGGFDAAANFDTYLWRVARFTIWQAVASSLLSVLFAIPIARALYAEARFPGRGLILRLFALPLALPALVAVLGVTSIYGRNGLIAHISDMLGHPMQPDIYGIAGILIAHIFFNMPLAVRLLLAAYESIPDDHWKLAAQLGMGSRARFRLIEWPVIRRSLPGMIGLVFMLCVTSFTTVLTLGGGPRATTLEVAIYQSLHFDFDPARAVALTFTQLALTLLILLILRLTGRPSEEGFTQTATPRRYGSPRKTERLFNIIVIALGFLYVALPIAGVVVSGLTADLVRLLSERIVWHAIATSLALGFSAALLAVFLSLALVAAREATRNARIANIFDTGASLILVMPPIVIGAGWFILLRHFTDPFVMAPLMVVTVNAAMAMPFAVRLLRPAWDTAASRHNKLCSQLGIKGFNRLRLIDWPSIRRPCGMAFAFAMALSLGDLGTIALFGSDALVTLPYLLLQRMGSYRTFDAAGLALILGVLCLALMMIADRAAASRKEAFLQ</sequence>
<name>THIP_BRUAB</name>
<keyword id="KW-0997">Cell inner membrane</keyword>
<keyword id="KW-1003">Cell membrane</keyword>
<keyword id="KW-0472">Membrane</keyword>
<keyword id="KW-0677">Repeat</keyword>
<keyword id="KW-0812">Transmembrane</keyword>
<keyword id="KW-1133">Transmembrane helix</keyword>
<keyword id="KW-0813">Transport</keyword>
<reference key="1">
    <citation type="journal article" date="2005" name="J. Bacteriol.">
        <title>Completion of the genome sequence of Brucella abortus and comparison to the highly similar genomes of Brucella melitensis and Brucella suis.</title>
        <authorList>
            <person name="Halling S.M."/>
            <person name="Peterson-Burch B.D."/>
            <person name="Bricker B.J."/>
            <person name="Zuerner R.L."/>
            <person name="Qing Z."/>
            <person name="Li L.-L."/>
            <person name="Kapur V."/>
            <person name="Alt D.P."/>
            <person name="Olsen S.C."/>
        </authorList>
    </citation>
    <scope>NUCLEOTIDE SEQUENCE [LARGE SCALE GENOMIC DNA]</scope>
    <source>
        <strain>9-941</strain>
    </source>
</reference>
<evidence type="ECO:0000250" key="1">
    <source>
        <dbReference type="UniProtKB" id="P31549"/>
    </source>
</evidence>
<evidence type="ECO:0000250" key="2">
    <source>
        <dbReference type="UniProtKB" id="Q8ZRV1"/>
    </source>
</evidence>
<evidence type="ECO:0000255" key="3"/>
<evidence type="ECO:0000255" key="4">
    <source>
        <dbReference type="PROSITE-ProRule" id="PRU00441"/>
    </source>
</evidence>
<evidence type="ECO:0000305" key="5"/>
<gene>
    <name type="primary">thiP</name>
    <name type="ordered locus">BruAb1_1743</name>
</gene>
<feature type="chain" id="PRO_0000282907" description="Thiamine transport system permease protein ThiP">
    <location>
        <begin position="1"/>
        <end position="543"/>
    </location>
</feature>
<feature type="transmembrane region" description="Helical" evidence="4">
    <location>
        <begin position="19"/>
        <end position="39"/>
    </location>
</feature>
<feature type="transmembrane region" description="Helical" evidence="4">
    <location>
        <begin position="64"/>
        <end position="84"/>
    </location>
</feature>
<feature type="transmembrane region" description="Helical" evidence="4">
    <location>
        <begin position="102"/>
        <end position="122"/>
    </location>
</feature>
<feature type="transmembrane region" description="Helical" evidence="4">
    <location>
        <begin position="142"/>
        <end position="162"/>
    </location>
</feature>
<feature type="transmembrane region" description="Helical" evidence="4">
    <location>
        <begin position="205"/>
        <end position="225"/>
    </location>
</feature>
<feature type="transmembrane region" description="Helical" evidence="4">
    <location>
        <begin position="250"/>
        <end position="270"/>
    </location>
</feature>
<feature type="transmembrane region" description="Helical" evidence="4">
    <location>
        <begin position="300"/>
        <end position="320"/>
    </location>
</feature>
<feature type="transmembrane region" description="Helical" evidence="4">
    <location>
        <begin position="343"/>
        <end position="363"/>
    </location>
</feature>
<feature type="transmembrane region" description="Helical" evidence="4">
    <location>
        <begin position="379"/>
        <end position="399"/>
    </location>
</feature>
<feature type="transmembrane region" description="Helical" evidence="4">
    <location>
        <begin position="406"/>
        <end position="426"/>
    </location>
</feature>
<feature type="transmembrane region" description="Helical" evidence="4">
    <location>
        <begin position="468"/>
        <end position="488"/>
    </location>
</feature>
<feature type="transmembrane region" description="Helical" evidence="4">
    <location>
        <begin position="510"/>
        <end position="530"/>
    </location>
</feature>
<feature type="domain" description="ABC transmembrane type-1 1" evidence="4">
    <location>
        <begin position="62"/>
        <end position="266"/>
    </location>
</feature>
<feature type="domain" description="ABC transmembrane type-1 2" evidence="4">
    <location>
        <begin position="339"/>
        <end position="530"/>
    </location>
</feature>
<comment type="function">
    <text evidence="2">Part of the ABC transporter complex ThiBPQ involved in thiamine import. Probably responsible for the translocation of the substrate across the membrane.</text>
</comment>
<comment type="subunit">
    <text evidence="2">The complex is composed of two ATP-binding proteins (ThiQ), two transmembrane proteins (ThiP) and a solute-binding protein (ThiB).</text>
</comment>
<comment type="subcellular location">
    <subcellularLocation>
        <location evidence="1">Cell inner membrane</location>
        <topology evidence="3">Multi-pass membrane protein</topology>
    </subcellularLocation>
</comment>
<comment type="similarity">
    <text evidence="5">Belongs to the binding-protein-dependent transport system permease family. CysTW subfamily.</text>
</comment>
<protein>
    <recommendedName>
        <fullName>Thiamine transport system permease protein ThiP</fullName>
    </recommendedName>
</protein>
<accession>Q57BC3</accession>
<proteinExistence type="inferred from homology"/>